<keyword id="KW-1015">Disulfide bond</keyword>
<keyword id="KW-0964">Secreted</keyword>
<keyword id="KW-0732">Signal</keyword>
<keyword id="KW-0800">Toxin</keyword>
<dbReference type="GO" id="GO:0005576">
    <property type="term" value="C:extracellular region"/>
    <property type="evidence" value="ECO:0007669"/>
    <property type="project" value="UniProtKB-SubCell"/>
</dbReference>
<dbReference type="GO" id="GO:0090729">
    <property type="term" value="F:toxin activity"/>
    <property type="evidence" value="ECO:0007669"/>
    <property type="project" value="UniProtKB-KW"/>
</dbReference>
<sequence>MNTVSVVQFLAVGCAVFVLYGRGVFAAEGVKKAGQHKDAELCLGSDGLGHRLDEFWYNDDMCQRFLCFKDDEGIMYEQIANCPIAIAEGDCTLKPGTKGHYPDCSPRRRIAPLRTKKKGKFKRNAFYLPY</sequence>
<feature type="signal peptide" evidence="1">
    <location>
        <begin position="1"/>
        <end position="26"/>
    </location>
</feature>
<feature type="chain" id="PRO_0000446810" description="U-scoloptoxin(16)-Er4a" evidence="3">
    <location>
        <begin position="27"/>
        <end position="130"/>
    </location>
</feature>
<comment type="subcellular location">
    <subcellularLocation>
        <location evidence="4">Secreted</location>
    </subcellularLocation>
</comment>
<comment type="tissue specificity">
    <text evidence="4">Expressed by the venom gland.</text>
</comment>
<comment type="PTM">
    <text evidence="3">Contains 3 disulfide bonds.</text>
</comment>
<comment type="similarity">
    <text evidence="3">Belongs to the scoloptoxin-16 family.</text>
</comment>
<comment type="caution">
    <text evidence="4">All E.rubripes family members described in 'Undeheim et al., 2014' have not been imported into UniProtKB. Please, refer to this paper to access them.</text>
</comment>
<comment type="online information" name="National Center for Biotechnology Information (NCBI)">
    <link uri="https://www.ncbi.nlm.nih.gov/nuccore/GASI01000140"/>
</comment>
<organism>
    <name type="scientific">Ethmostigmus rubripes</name>
    <name type="common">Giant centipede</name>
    <dbReference type="NCBI Taxonomy" id="62613"/>
    <lineage>
        <taxon>Eukaryota</taxon>
        <taxon>Metazoa</taxon>
        <taxon>Ecdysozoa</taxon>
        <taxon>Arthropoda</taxon>
        <taxon>Myriapoda</taxon>
        <taxon>Chilopoda</taxon>
        <taxon>Pleurostigmophora</taxon>
        <taxon>Scolopendromorpha</taxon>
        <taxon>Scolopendridae</taxon>
        <taxon>Ethmostigmus</taxon>
    </lineage>
</organism>
<accession>P0DQC7</accession>
<evidence type="ECO:0000255" key="1"/>
<evidence type="ECO:0000303" key="2">
    <source>
    </source>
</evidence>
<evidence type="ECO:0000305" key="3"/>
<evidence type="ECO:0000305" key="4">
    <source>
    </source>
</evidence>
<protein>
    <recommendedName>
        <fullName evidence="2">U-scoloptoxin(16)-Er4a</fullName>
        <shortName evidence="2">U-SLPTX(16)-Er4a</shortName>
    </recommendedName>
</protein>
<reference key="1">
    <citation type="journal article" date="2014" name="Mol. Biol. Evol.">
        <title>Clawing through evolution: toxin diversification and convergence in the ancient lineage Chilopoda (centipedes).</title>
        <authorList>
            <person name="Undheim E.A."/>
            <person name="Jones A."/>
            <person name="Clauser K.R."/>
            <person name="Holland J.W."/>
            <person name="Pineda S.S."/>
            <person name="King G.F."/>
            <person name="Fry B.G."/>
        </authorList>
    </citation>
    <scope>NUCLEOTIDE SEQUENCE [MRNA]</scope>
    <scope>NOMENCLATURE</scope>
    <source>
        <tissue>Venom gland</tissue>
    </source>
</reference>
<name>TXG4A_ETHRU</name>
<proteinExistence type="evidence at transcript level"/>